<keyword id="KW-0156">Chromatin regulator</keyword>
<keyword id="KW-0223">Dioxygenase</keyword>
<keyword id="KW-0408">Iron</keyword>
<keyword id="KW-0479">Metal-binding</keyword>
<keyword id="KW-0539">Nucleus</keyword>
<keyword id="KW-0560">Oxidoreductase</keyword>
<keyword id="KW-0597">Phosphoprotein</keyword>
<keyword id="KW-0678">Repressor</keyword>
<keyword id="KW-0804">Transcription</keyword>
<keyword id="KW-0805">Transcription regulation</keyword>
<reference key="1">
    <citation type="journal article" date="2007" name="Nature">
        <title>Evolution of genes and genomes on the Drosophila phylogeny.</title>
        <authorList>
            <consortium name="Drosophila 12 genomes consortium"/>
        </authorList>
    </citation>
    <scope>NUCLEOTIDE SEQUENCE [LARGE SCALE GENOMIC DNA]</scope>
    <source>
        <strain>Tucson 14021-0224.01</strain>
    </source>
</reference>
<comment type="function">
    <text evidence="1">Oxygenase that can act as both a histone lysine demethylase and a ribosomal histidine hydroxylase. Specifically demethylates 'Lys-4' (H3K4me) and 'Lys-36' (H3K36me) of histone H3, thereby playing a central role in histone code (By similarity).</text>
</comment>
<comment type="catalytic activity">
    <reaction>
        <text>N(6),N(6)-dimethyl-L-lysyl(36)-[histone H3] + 2 2-oxoglutarate + 2 O2 = L-lysyl(36)-[histone H3] + 2 formaldehyde + 2 succinate + 2 CO2</text>
        <dbReference type="Rhea" id="RHEA:42032"/>
        <dbReference type="Rhea" id="RHEA-COMP:9785"/>
        <dbReference type="Rhea" id="RHEA-COMP:9787"/>
        <dbReference type="ChEBI" id="CHEBI:15379"/>
        <dbReference type="ChEBI" id="CHEBI:16526"/>
        <dbReference type="ChEBI" id="CHEBI:16810"/>
        <dbReference type="ChEBI" id="CHEBI:16842"/>
        <dbReference type="ChEBI" id="CHEBI:29969"/>
        <dbReference type="ChEBI" id="CHEBI:30031"/>
        <dbReference type="ChEBI" id="CHEBI:61976"/>
        <dbReference type="EC" id="1.14.11.27"/>
    </reaction>
</comment>
<comment type="cofactor">
    <cofactor evidence="1">
        <name>Fe(2+)</name>
        <dbReference type="ChEBI" id="CHEBI:29033"/>
    </cofactor>
    <text evidence="1">Binds 1 Fe(2+) ion per subunit.</text>
</comment>
<comment type="subcellular location">
    <subcellularLocation>
        <location evidence="1">Nucleus</location>
    </subcellularLocation>
</comment>
<comment type="similarity">
    <text evidence="4">Belongs to the ROX family. NO66 subfamily.</text>
</comment>
<gene>
    <name type="ORF">GG18702</name>
</gene>
<feature type="chain" id="PRO_0000390985" description="Bifunctional lysine-specific demethylase and histidyl-hydroxylase NO66">
    <location>
        <begin position="1"/>
        <end position="657"/>
    </location>
</feature>
<feature type="domain" description="JmjC" evidence="2">
    <location>
        <begin position="315"/>
        <end position="454"/>
    </location>
</feature>
<feature type="region of interest" description="Disordered" evidence="3">
    <location>
        <begin position="1"/>
        <end position="141"/>
    </location>
</feature>
<feature type="region of interest" description="Disordered" evidence="3">
    <location>
        <begin position="165"/>
        <end position="198"/>
    </location>
</feature>
<feature type="compositionally biased region" description="Polar residues" evidence="3">
    <location>
        <begin position="32"/>
        <end position="41"/>
    </location>
</feature>
<feature type="compositionally biased region" description="Basic and acidic residues" evidence="3">
    <location>
        <begin position="55"/>
        <end position="71"/>
    </location>
</feature>
<feature type="compositionally biased region" description="Polar residues" evidence="3">
    <location>
        <begin position="73"/>
        <end position="84"/>
    </location>
</feature>
<feature type="compositionally biased region" description="Polar residues" evidence="3">
    <location>
        <begin position="132"/>
        <end position="141"/>
    </location>
</feature>
<feature type="binding site" evidence="2">
    <location>
        <position position="355"/>
    </location>
    <ligand>
        <name>Fe cation</name>
        <dbReference type="ChEBI" id="CHEBI:24875"/>
        <note>catalytic</note>
    </ligand>
</feature>
<feature type="binding site" evidence="2">
    <location>
        <position position="357"/>
    </location>
    <ligand>
        <name>Fe cation</name>
        <dbReference type="ChEBI" id="CHEBI:24875"/>
        <note>catalytic</note>
    </ligand>
</feature>
<feature type="binding site" evidence="2">
    <location>
        <position position="420"/>
    </location>
    <ligand>
        <name>Fe cation</name>
        <dbReference type="ChEBI" id="CHEBI:24875"/>
        <note>catalytic</note>
    </ligand>
</feature>
<feature type="modified residue" description="Phosphoserine" evidence="1">
    <location>
        <position position="133"/>
    </location>
</feature>
<feature type="modified residue" description="Phosphothreonine" evidence="1">
    <location>
        <position position="139"/>
    </location>
</feature>
<feature type="modified residue" description="Phosphoserine" evidence="1">
    <location>
        <position position="140"/>
    </location>
</feature>
<sequence length="657" mass="73649">MQKASTSAGAKTAGNRKMQKSPNNGAAKAQKSAKTVDTVTDSELLYNPPAFLTAAEKERRKYLQARVRAEGESASTSSKSNATRPTDRKRHLQAEDPLPADANNNDTNKGGKVAQESASTQAAGTTKRKQPRSQGLEQTSPIMVNGEALACPLVRKSLPAAEAAKSCPLPSKKDSVTKSPMTVHEAPKVDSATSNSNEKQLATMPVDIHKTDSIEEGRRVLEWLINPVAVNQFFADFWENNACVVQRKNPNYYSKLMSFKMIDDILMRNRVEFGTNLDVTIYRNGKRETLNPEGRAFPSVVWDFYAEGCSIRILNPSTYLLGLRQVCSIMQEFFHCLVGANVYLTPPNSQGFAPHYDDIEAFVIQVEGRKRWRLYEPPEKADQLSRTSSGNYDQKQLGEPIIDEVLEAGDLLYFPRGTVHQAITEKGHFSLHITLSVYQQQAYANLLETLMPIVLKKAVKKSVALRRGLPLHTFHVLGEVQRTNRCESRDQLVENVQKLVSKYLMPSTQDIDEAVDQLAKKFQHEALPPIILPEEKVRTVFGSRSISDQEGNSVCDYEFDTDTSVRLLRANILRLVNEDDGSVKIYHHVNNALEYCKYEPNFLEILQEEAIAVEVLISAYPYYITVDQLPLKTVARKVEVATALWEHGLLMTEKPFK</sequence>
<protein>
    <recommendedName>
        <fullName>Bifunctional lysine-specific demethylase and histidyl-hydroxylase NO66</fullName>
        <ecNumber>1.14.11.-</ecNumber>
        <ecNumber>1.14.11.27</ecNumber>
    </recommendedName>
    <alternativeName>
        <fullName>Histone lysine demethylase NO66</fullName>
    </alternativeName>
</protein>
<evidence type="ECO:0000250" key="1"/>
<evidence type="ECO:0000255" key="2">
    <source>
        <dbReference type="PROSITE-ProRule" id="PRU00538"/>
    </source>
</evidence>
<evidence type="ECO:0000256" key="3">
    <source>
        <dbReference type="SAM" id="MobiDB-lite"/>
    </source>
</evidence>
<evidence type="ECO:0000305" key="4"/>
<accession>B3NU20</accession>
<proteinExistence type="inferred from homology"/>
<organism>
    <name type="scientific">Drosophila erecta</name>
    <name type="common">Fruit fly</name>
    <dbReference type="NCBI Taxonomy" id="7220"/>
    <lineage>
        <taxon>Eukaryota</taxon>
        <taxon>Metazoa</taxon>
        <taxon>Ecdysozoa</taxon>
        <taxon>Arthropoda</taxon>
        <taxon>Hexapoda</taxon>
        <taxon>Insecta</taxon>
        <taxon>Pterygota</taxon>
        <taxon>Neoptera</taxon>
        <taxon>Endopterygota</taxon>
        <taxon>Diptera</taxon>
        <taxon>Brachycera</taxon>
        <taxon>Muscomorpha</taxon>
        <taxon>Ephydroidea</taxon>
        <taxon>Drosophilidae</taxon>
        <taxon>Drosophila</taxon>
        <taxon>Sophophora</taxon>
    </lineage>
</organism>
<name>NO66_DROER</name>
<dbReference type="EC" id="1.14.11.-"/>
<dbReference type="EC" id="1.14.11.27"/>
<dbReference type="EMBL" id="CH954180">
    <property type="protein sequence ID" value="EDV45796.1"/>
    <property type="molecule type" value="Genomic_DNA"/>
</dbReference>
<dbReference type="RefSeq" id="XP_001976869.1">
    <property type="nucleotide sequence ID" value="XM_001976833.2"/>
</dbReference>
<dbReference type="SMR" id="B3NU20"/>
<dbReference type="EnsemblMetazoa" id="FBtr0138756">
    <property type="protein sequence ID" value="FBpp0137248"/>
    <property type="gene ID" value="FBgn0110911"/>
</dbReference>
<dbReference type="eggNOG" id="KOG3706">
    <property type="taxonomic scope" value="Eukaryota"/>
</dbReference>
<dbReference type="HOGENOM" id="CLU_013645_2_1_1"/>
<dbReference type="OMA" id="YLEYMGV"/>
<dbReference type="OrthoDB" id="425950at2759"/>
<dbReference type="PhylomeDB" id="B3NU20"/>
<dbReference type="Proteomes" id="UP000008711">
    <property type="component" value="Unassembled WGS sequence"/>
</dbReference>
<dbReference type="GO" id="GO:0005730">
    <property type="term" value="C:nucleolus"/>
    <property type="evidence" value="ECO:0007669"/>
    <property type="project" value="EnsemblMetazoa"/>
</dbReference>
<dbReference type="GO" id="GO:0005634">
    <property type="term" value="C:nucleus"/>
    <property type="evidence" value="ECO:0000250"/>
    <property type="project" value="UniProtKB"/>
</dbReference>
<dbReference type="GO" id="GO:0016706">
    <property type="term" value="F:2-oxoglutarate-dependent dioxygenase activity"/>
    <property type="evidence" value="ECO:0000250"/>
    <property type="project" value="UniProtKB"/>
</dbReference>
<dbReference type="GO" id="GO:0051864">
    <property type="term" value="F:histone H3K36 demethylase activity"/>
    <property type="evidence" value="ECO:0000250"/>
    <property type="project" value="UniProtKB"/>
</dbReference>
<dbReference type="GO" id="GO:0140680">
    <property type="term" value="F:histone H3K36me/H3K36me2 demethylase activity"/>
    <property type="evidence" value="ECO:0007669"/>
    <property type="project" value="UniProtKB-EC"/>
</dbReference>
<dbReference type="GO" id="GO:0034647">
    <property type="term" value="F:histone H3K4me/H3K4me2/H3K4me3 demethylase activity"/>
    <property type="evidence" value="ECO:0000250"/>
    <property type="project" value="UniProtKB"/>
</dbReference>
<dbReference type="GO" id="GO:0005506">
    <property type="term" value="F:iron ion binding"/>
    <property type="evidence" value="ECO:0000250"/>
    <property type="project" value="UniProtKB"/>
</dbReference>
<dbReference type="GO" id="GO:0048149">
    <property type="term" value="P:behavioral response to ethanol"/>
    <property type="evidence" value="ECO:0007669"/>
    <property type="project" value="EnsemblMetazoa"/>
</dbReference>
<dbReference type="GO" id="GO:0048512">
    <property type="term" value="P:circadian behavior"/>
    <property type="evidence" value="ECO:0007669"/>
    <property type="project" value="EnsemblMetazoa"/>
</dbReference>
<dbReference type="GO" id="GO:0045892">
    <property type="term" value="P:negative regulation of DNA-templated transcription"/>
    <property type="evidence" value="ECO:0000250"/>
    <property type="project" value="UniProtKB"/>
</dbReference>
<dbReference type="FunFam" id="2.60.120.650:FF:000013">
    <property type="entry name" value="Ribosomal oxygenase 1"/>
    <property type="match status" value="1"/>
</dbReference>
<dbReference type="FunFam" id="1.10.10.1500:FF:000001">
    <property type="entry name" value="ribosomal oxygenase 1 isoform X1"/>
    <property type="match status" value="1"/>
</dbReference>
<dbReference type="FunFam" id="3.90.930.40:FF:000001">
    <property type="entry name" value="ribosomal oxygenase 1 isoform X1"/>
    <property type="match status" value="1"/>
</dbReference>
<dbReference type="Gene3D" id="3.90.930.40">
    <property type="match status" value="1"/>
</dbReference>
<dbReference type="Gene3D" id="2.60.120.650">
    <property type="entry name" value="Cupin"/>
    <property type="match status" value="1"/>
</dbReference>
<dbReference type="Gene3D" id="1.10.10.1500">
    <property type="entry name" value="JmjC domain-containing ribosomal oxygenase (ROX), dimer domain"/>
    <property type="match status" value="1"/>
</dbReference>
<dbReference type="InterPro" id="IPR003347">
    <property type="entry name" value="JmjC_dom"/>
</dbReference>
<dbReference type="InterPro" id="IPR039994">
    <property type="entry name" value="NO66-like"/>
</dbReference>
<dbReference type="InterPro" id="IPR049043">
    <property type="entry name" value="RIOX1/NO66-like_C_WH"/>
</dbReference>
<dbReference type="PANTHER" id="PTHR13096">
    <property type="entry name" value="MINA53 MYC INDUCED NUCLEAR ANTIGEN"/>
    <property type="match status" value="1"/>
</dbReference>
<dbReference type="PANTHER" id="PTHR13096:SF8">
    <property type="entry name" value="RIBOSOMAL OXYGENASE 1"/>
    <property type="match status" value="1"/>
</dbReference>
<dbReference type="Pfam" id="PF08007">
    <property type="entry name" value="JmjC_2"/>
    <property type="match status" value="1"/>
</dbReference>
<dbReference type="Pfam" id="PF21233">
    <property type="entry name" value="RIOX1_C_WH"/>
    <property type="match status" value="1"/>
</dbReference>
<dbReference type="SMART" id="SM00558">
    <property type="entry name" value="JmjC"/>
    <property type="match status" value="1"/>
</dbReference>
<dbReference type="SUPFAM" id="SSF51197">
    <property type="entry name" value="Clavaminate synthase-like"/>
    <property type="match status" value="1"/>
</dbReference>
<dbReference type="PROSITE" id="PS51184">
    <property type="entry name" value="JMJC"/>
    <property type="match status" value="1"/>
</dbReference>